<reference key="1">
    <citation type="journal article" date="2005" name="Genome Res.">
        <title>Complete genome sequence of the hyperthermophilic archaeon Thermococcus kodakaraensis KOD1 and comparison with Pyrococcus genomes.</title>
        <authorList>
            <person name="Fukui T."/>
            <person name="Atomi H."/>
            <person name="Kanai T."/>
            <person name="Matsumi R."/>
            <person name="Fujiwara S."/>
            <person name="Imanaka T."/>
        </authorList>
    </citation>
    <scope>NUCLEOTIDE SEQUENCE [LARGE SCALE GENOMIC DNA]</scope>
    <source>
        <strain>ATCC BAA-918 / JCM 12380 / KOD1</strain>
    </source>
</reference>
<reference key="2">
    <citation type="journal article" date="2007" name="J. Bacteriol.">
        <title>Bifunctional CTP:inositol-1-phosphate cytidylyltransferase/CDP-inositol:inositol-1-phosphate transferase, the key enzyme for di-myo-inositol-phosphate synthesis in several (hyper)thermophiles.</title>
        <authorList>
            <person name="Rodrigues M.V."/>
            <person name="Borges N."/>
            <person name="Henriques M."/>
            <person name="Lamosa P."/>
            <person name="Ventura R."/>
            <person name="Fernandes C."/>
            <person name="Empadinhas N."/>
            <person name="Maycock C."/>
            <person name="da Costa M.S."/>
            <person name="Santos H."/>
        </authorList>
    </citation>
    <scope>FUNCTION</scope>
    <scope>CATALYTIC ACTIVITY</scope>
</reference>
<accession>Q5JDA9</accession>
<organism>
    <name type="scientific">Thermococcus kodakarensis (strain ATCC BAA-918 / JCM 12380 / KOD1)</name>
    <name type="common">Pyrococcus kodakaraensis (strain KOD1)</name>
    <dbReference type="NCBI Taxonomy" id="69014"/>
    <lineage>
        <taxon>Archaea</taxon>
        <taxon>Methanobacteriati</taxon>
        <taxon>Methanobacteriota</taxon>
        <taxon>Thermococci</taxon>
        <taxon>Thermococcales</taxon>
        <taxon>Thermococcaceae</taxon>
        <taxon>Thermococcus</taxon>
    </lineage>
</organism>
<feature type="chain" id="PRO_0000424334" description="Bifunctional IPC transferase and DIPP synthase">
    <location>
        <begin position="1"/>
        <end position="432"/>
    </location>
</feature>
<feature type="transmembrane region" description="Helical" evidence="2">
    <location>
        <begin position="264"/>
        <end position="284"/>
    </location>
</feature>
<feature type="transmembrane region" description="Helical" evidence="2">
    <location>
        <begin position="337"/>
        <end position="356"/>
    </location>
</feature>
<feature type="transmembrane region" description="Helical" evidence="2">
    <location>
        <begin position="385"/>
        <end position="405"/>
    </location>
</feature>
<feature type="region of interest" description="MobA-like NTP transferase" evidence="1">
    <location>
        <begin position="3"/>
        <end position="225"/>
    </location>
</feature>
<feature type="region of interest" description="CDP-alcohol phosphatidyltransferases" evidence="1">
    <location>
        <begin position="226"/>
        <end position="426"/>
    </location>
</feature>
<feature type="binding site" evidence="1">
    <location>
        <begin position="9"/>
        <end position="11"/>
    </location>
    <ligand>
        <name>CTP</name>
        <dbReference type="ChEBI" id="CHEBI:37563"/>
    </ligand>
</feature>
<feature type="binding site" evidence="1">
    <location>
        <position position="22"/>
    </location>
    <ligand>
        <name>CTP</name>
        <dbReference type="ChEBI" id="CHEBI:37563"/>
    </ligand>
</feature>
<feature type="binding site" evidence="1">
    <location>
        <position position="113"/>
    </location>
    <ligand>
        <name>CTP</name>
        <dbReference type="ChEBI" id="CHEBI:37563"/>
    </ligand>
</feature>
<feature type="binding site" evidence="1">
    <location>
        <position position="113"/>
    </location>
    <ligand>
        <name>Mg(2+)</name>
        <dbReference type="ChEBI" id="CHEBI:18420"/>
    </ligand>
</feature>
<protein>
    <recommendedName>
        <fullName>Bifunctional IPC transferase and DIPP synthase</fullName>
    </recommendedName>
    <domain>
        <recommendedName>
            <fullName>1L-myo-inositol-1-phosphate cytidylyltransferase</fullName>
            <shortName>IPCT</shortName>
            <ecNumber>2.7.7.74</ecNumber>
        </recommendedName>
    </domain>
    <domain>
        <recommendedName>
            <fullName>CDP-L-myo-inositol myo-inositolphosphotransferase</fullName>
            <shortName>DIPP synthase</shortName>
            <ecNumber>2.7.8.34</ecNumber>
        </recommendedName>
        <alternativeName>
            <fullName>Di-myo-inositol-1,3'-phosphate-1'-phosphate synthase</fullName>
        </alternativeName>
    </domain>
</protein>
<keyword id="KW-0460">Magnesium</keyword>
<keyword id="KW-0472">Membrane</keyword>
<keyword id="KW-0479">Metal-binding</keyword>
<keyword id="KW-0511">Multifunctional enzyme</keyword>
<keyword id="KW-1185">Reference proteome</keyword>
<keyword id="KW-0808">Transferase</keyword>
<keyword id="KW-0812">Transmembrane</keyword>
<keyword id="KW-1133">Transmembrane helix</keyword>
<name>DIPPS_THEKO</name>
<sequence length="432" mass="48718">MVPERAVILAAGLGTRMGRKPKGLVRVAGREILYRTIRLLQENGVKKFIVVTNERYAPLYQEFIERHGFDAEIIINPEPEKGNGHSLHLAKEKVSGKFALTMSDHVYSRDFIERAVRGRGLIADREPRWVDIGEATKVQVKDEKVWKIGKRLKEWDAIDTGFFVLDDEIFKVTEILENEKNGDYSLSEVMERAKVSVTFVDGLGWTDVDTPEEIKRARRMLVRTAVKGTGDGFVSRHLNRRISTRVSELLVEKVTPNQMTVVTFLLGIISALTTLVSLPLAGILYQLSSILDGIDGELARAQLRTSKLGGYVDSILDRYVDGSFLALLAYATINEPIWYFVALLALLGSVMVSYSTERFRGAFCRDAYKEVPALRKLPGKRDERVFLTMLFLLYQIAASIKALFLTLAVLTNFRVALTLYFVVKKVSHPKTI</sequence>
<dbReference type="EC" id="2.7.7.74"/>
<dbReference type="EC" id="2.7.8.34"/>
<dbReference type="EMBL" id="AP006878">
    <property type="protein sequence ID" value="BAD86468.1"/>
    <property type="molecule type" value="Genomic_DNA"/>
</dbReference>
<dbReference type="RefSeq" id="WP_011251229.1">
    <property type="nucleotide sequence ID" value="NC_006624.1"/>
</dbReference>
<dbReference type="SMR" id="Q5JDA9"/>
<dbReference type="STRING" id="69014.TK2279"/>
<dbReference type="EnsemblBacteria" id="BAD86468">
    <property type="protein sequence ID" value="BAD86468"/>
    <property type="gene ID" value="TK2279"/>
</dbReference>
<dbReference type="GeneID" id="78448824"/>
<dbReference type="KEGG" id="tko:TK2279"/>
<dbReference type="PATRIC" id="fig|69014.16.peg.2234"/>
<dbReference type="eggNOG" id="arCOG00673">
    <property type="taxonomic scope" value="Archaea"/>
</dbReference>
<dbReference type="HOGENOM" id="CLU_643435_0_0_2"/>
<dbReference type="InParanoid" id="Q5JDA9"/>
<dbReference type="OrthoDB" id="15372at2157"/>
<dbReference type="PhylomeDB" id="Q5JDA9"/>
<dbReference type="BRENDA" id="2.7.7.74">
    <property type="organism ID" value="5246"/>
</dbReference>
<dbReference type="BRENDA" id="2.7.8.34">
    <property type="organism ID" value="5246"/>
</dbReference>
<dbReference type="Proteomes" id="UP000000536">
    <property type="component" value="Chromosome"/>
</dbReference>
<dbReference type="GO" id="GO:0016020">
    <property type="term" value="C:membrane"/>
    <property type="evidence" value="ECO:0007669"/>
    <property type="project" value="UniProtKB-SubCell"/>
</dbReference>
<dbReference type="GO" id="GO:0046872">
    <property type="term" value="F:metal ion binding"/>
    <property type="evidence" value="ECO:0007669"/>
    <property type="project" value="UniProtKB-KW"/>
</dbReference>
<dbReference type="GO" id="GO:0016779">
    <property type="term" value="F:nucleotidyltransferase activity"/>
    <property type="evidence" value="ECO:0000314"/>
    <property type="project" value="UniProtKB"/>
</dbReference>
<dbReference type="GO" id="GO:0016780">
    <property type="term" value="F:phosphotransferase activity, for other substituted phosphate groups"/>
    <property type="evidence" value="ECO:0000314"/>
    <property type="project" value="UniProtKB"/>
</dbReference>
<dbReference type="GO" id="GO:0008654">
    <property type="term" value="P:phospholipid biosynthetic process"/>
    <property type="evidence" value="ECO:0007669"/>
    <property type="project" value="InterPro"/>
</dbReference>
<dbReference type="FunFam" id="1.20.120.1760:FF:000042">
    <property type="entry name" value="Bifunctional IPC transferase and DIPP synthase"/>
    <property type="match status" value="1"/>
</dbReference>
<dbReference type="FunFam" id="3.90.550.10:FF:000282">
    <property type="entry name" value="Bifunctional IPC transferase and DIPP synthase"/>
    <property type="match status" value="1"/>
</dbReference>
<dbReference type="Gene3D" id="1.20.120.1760">
    <property type="match status" value="1"/>
</dbReference>
<dbReference type="Gene3D" id="3.90.550.10">
    <property type="entry name" value="Spore Coat Polysaccharide Biosynthesis Protein SpsA, Chain A"/>
    <property type="match status" value="1"/>
</dbReference>
<dbReference type="InterPro" id="IPR000462">
    <property type="entry name" value="CDP-OH_P_trans"/>
</dbReference>
<dbReference type="InterPro" id="IPR043130">
    <property type="entry name" value="CDP-OH_PTrfase_TM_dom"/>
</dbReference>
<dbReference type="InterPro" id="IPR048254">
    <property type="entry name" value="CDP_ALCOHOL_P_TRANSF_CS"/>
</dbReference>
<dbReference type="InterPro" id="IPR053433">
    <property type="entry name" value="IPC_transferase/DIPP_synth"/>
</dbReference>
<dbReference type="InterPro" id="IPR025877">
    <property type="entry name" value="MobA-like_NTP_Trfase"/>
</dbReference>
<dbReference type="InterPro" id="IPR029044">
    <property type="entry name" value="Nucleotide-diphossugar_trans"/>
</dbReference>
<dbReference type="NCBIfam" id="NF041135">
    <property type="entry name" value="IPPtranDIPPsyn_Thcocales"/>
    <property type="match status" value="1"/>
</dbReference>
<dbReference type="PANTHER" id="PTHR19136:SF84">
    <property type="entry name" value="BIFUNCTIONAL IPC TRANSFERASE AND DIPP SYNTHASE"/>
    <property type="match status" value="1"/>
</dbReference>
<dbReference type="PANTHER" id="PTHR19136">
    <property type="entry name" value="MOLYBDENUM COFACTOR GUANYLYLTRANSFERASE"/>
    <property type="match status" value="1"/>
</dbReference>
<dbReference type="Pfam" id="PF01066">
    <property type="entry name" value="CDP-OH_P_transf"/>
    <property type="match status" value="1"/>
</dbReference>
<dbReference type="Pfam" id="PF12804">
    <property type="entry name" value="NTP_transf_3"/>
    <property type="match status" value="1"/>
</dbReference>
<dbReference type="SUPFAM" id="SSF53448">
    <property type="entry name" value="Nucleotide-diphospho-sugar transferases"/>
    <property type="match status" value="1"/>
</dbReference>
<dbReference type="PROSITE" id="PS00379">
    <property type="entry name" value="CDP_ALCOHOL_P_TRANSF"/>
    <property type="match status" value="1"/>
</dbReference>
<evidence type="ECO:0000250" key="1"/>
<evidence type="ECO:0000255" key="2"/>
<evidence type="ECO:0000269" key="3">
    <source>
    </source>
</evidence>
<evidence type="ECO:0000305" key="4"/>
<gene>
    <name type="ordered locus">TK2279</name>
</gene>
<proteinExistence type="evidence at protein level"/>
<comment type="function">
    <text evidence="3">Involved in biosynthesis of di-myo-inositol phosphate (DIP), a widespread organic solute in microorganisms adapted to hot environments. Catalyzes the condensation of CTP and L-myo-inositol-1-phosphate into CDP-L-myo-inositol, as well as the biosynthesis of di-myo-inositol-1,3'-phosphate-1'-phosphate (DIPP) from CDP-L-myo-inositol and L-myo-inositol-1-phosphate.</text>
</comment>
<comment type="catalytic activity">
    <reaction evidence="3">
        <text>1D-myo-inositol 3-phosphate + CTP + H(+) = CDP-1L-myo-inositol + diphosphate</text>
        <dbReference type="Rhea" id="RHEA:30647"/>
        <dbReference type="ChEBI" id="CHEBI:15378"/>
        <dbReference type="ChEBI" id="CHEBI:33019"/>
        <dbReference type="ChEBI" id="CHEBI:37563"/>
        <dbReference type="ChEBI" id="CHEBI:58401"/>
        <dbReference type="ChEBI" id="CHEBI:62573"/>
        <dbReference type="EC" id="2.7.7.74"/>
    </reaction>
</comment>
<comment type="catalytic activity">
    <reaction evidence="3">
        <text>CDP-1L-myo-inositol + 1D-myo-inositol 3-phosphate = bis(1L-myo-inositol) 3,1'-phosphate 1-phosphate + CMP + H(+)</text>
        <dbReference type="Rhea" id="RHEA:31327"/>
        <dbReference type="ChEBI" id="CHEBI:15378"/>
        <dbReference type="ChEBI" id="CHEBI:58401"/>
        <dbReference type="ChEBI" id="CHEBI:60377"/>
        <dbReference type="ChEBI" id="CHEBI:62573"/>
        <dbReference type="ChEBI" id="CHEBI:62576"/>
        <dbReference type="EC" id="2.7.8.34"/>
    </reaction>
</comment>
<comment type="cofactor">
    <cofactor evidence="1">
        <name>Mg(2+)</name>
        <dbReference type="ChEBI" id="CHEBI:18420"/>
    </cofactor>
</comment>
<comment type="subcellular location">
    <subcellularLocation>
        <location evidence="4">Membrane</location>
        <topology evidence="4">Multi-pass membrane protein</topology>
    </subcellularLocation>
</comment>
<comment type="similarity">
    <text evidence="4">In the N-terminal section; belongs to the MobA family.</text>
</comment>
<comment type="similarity">
    <text evidence="4">In the C-terminal section; belongs to the CDP-alcohol phosphatidyltransferase class-I family.</text>
</comment>